<reference key="1">
    <citation type="book" date="2006" name="Gram positive pathogens, 2nd edition">
        <title>The Staphylococcus aureus NCTC 8325 genome.</title>
        <editorList>
            <person name="Fischetti V."/>
            <person name="Novick R."/>
            <person name="Ferretti J."/>
            <person name="Portnoy D."/>
            <person name="Rood J."/>
        </editorList>
        <authorList>
            <person name="Gillaspy A.F."/>
            <person name="Worrell V."/>
            <person name="Orvis J."/>
            <person name="Roe B.A."/>
            <person name="Dyer D.W."/>
            <person name="Iandolo J.J."/>
        </authorList>
    </citation>
    <scope>NUCLEOTIDE SEQUENCE [LARGE SCALE GENOMIC DNA]</scope>
    <source>
        <strain>NCTC 8325 / PS 47</strain>
    </source>
</reference>
<comment type="function">
    <text evidence="2">Catalyzes two reactions in de novo purine nucleotide biosynthesis. Catalyzes the breakdown of 5-aminoimidazole- (N-succinylocarboxamide) ribotide (SAICAR or 2-[5-amino-1-(5-phospho-beta-D-ribosyl)imidazole-4-carboxamido]succinate) to 5-aminoimidazole-4-carboxamide ribotide (AICAR or 5-amino-1-(5-phospho-beta-D-ribosyl)imidazole-4-carboxamide) and fumarate, and of adenylosuccinate (ADS or N(6)-(1,2-dicarboxyethyl)-AMP) to adenosine monophosphate (AMP) and fumarate.</text>
</comment>
<comment type="catalytic activity">
    <reaction evidence="2">
        <text>N(6)-(1,2-dicarboxyethyl)-AMP = fumarate + AMP</text>
        <dbReference type="Rhea" id="RHEA:16853"/>
        <dbReference type="ChEBI" id="CHEBI:29806"/>
        <dbReference type="ChEBI" id="CHEBI:57567"/>
        <dbReference type="ChEBI" id="CHEBI:456215"/>
        <dbReference type="EC" id="4.3.2.2"/>
    </reaction>
    <physiologicalReaction direction="left-to-right" evidence="2">
        <dbReference type="Rhea" id="RHEA:16854"/>
    </physiologicalReaction>
</comment>
<comment type="catalytic activity">
    <reaction evidence="2">
        <text>(2S)-2-[5-amino-1-(5-phospho-beta-D-ribosyl)imidazole-4-carboxamido]succinate = 5-amino-1-(5-phospho-beta-D-ribosyl)imidazole-4-carboxamide + fumarate</text>
        <dbReference type="Rhea" id="RHEA:23920"/>
        <dbReference type="ChEBI" id="CHEBI:29806"/>
        <dbReference type="ChEBI" id="CHEBI:58443"/>
        <dbReference type="ChEBI" id="CHEBI:58475"/>
        <dbReference type="EC" id="4.3.2.2"/>
    </reaction>
    <physiologicalReaction direction="left-to-right" evidence="2">
        <dbReference type="Rhea" id="RHEA:23921"/>
    </physiologicalReaction>
</comment>
<comment type="pathway">
    <text>Purine metabolism; AMP biosynthesis via de novo pathway; AMP from IMP: step 2/2.</text>
</comment>
<comment type="pathway">
    <text>Purine metabolism; IMP biosynthesis via de novo pathway; 5-amino-1-(5-phospho-D-ribosyl)imidazole-4-carboxamide from 5-amino-1-(5-phospho-D-ribosyl)imidazole-4-carboxylate: step 2/2.</text>
</comment>
<comment type="subunit">
    <text evidence="1">Homodimer and homotetramer. Residues from neighboring subunits contribute catalytic and substrate-binding residues to each active site (By similarity).</text>
</comment>
<comment type="similarity">
    <text evidence="3">Belongs to the lyase 1 family. Adenylosuccinate lyase subfamily.</text>
</comment>
<name>PUR8_STAA8</name>
<feature type="chain" id="PRO_0000259980" description="Adenylosuccinate lyase">
    <location>
        <begin position="1"/>
        <end position="431"/>
    </location>
</feature>
<feature type="active site" description="Proton donor/acceptor" evidence="2">
    <location>
        <position position="141"/>
    </location>
</feature>
<feature type="active site" description="Proton donor/acceptor" evidence="2">
    <location>
        <position position="262"/>
    </location>
</feature>
<feature type="binding site" evidence="2">
    <location>
        <begin position="4"/>
        <end position="5"/>
    </location>
    <ligand>
        <name>N(6)-(1,2-dicarboxyethyl)-AMP</name>
        <dbReference type="ChEBI" id="CHEBI:57567"/>
    </ligand>
</feature>
<feature type="binding site" evidence="2">
    <location>
        <begin position="67"/>
        <end position="69"/>
    </location>
    <ligand>
        <name>N(6)-(1,2-dicarboxyethyl)-AMP</name>
        <dbReference type="ChEBI" id="CHEBI:57567"/>
    </ligand>
</feature>
<feature type="binding site" evidence="2">
    <location>
        <begin position="93"/>
        <end position="94"/>
    </location>
    <ligand>
        <name>N(6)-(1,2-dicarboxyethyl)-AMP</name>
        <dbReference type="ChEBI" id="CHEBI:57567"/>
    </ligand>
</feature>
<feature type="binding site" evidence="2">
    <location>
        <position position="212"/>
    </location>
    <ligand>
        <name>N(6)-(1,2-dicarboxyethyl)-AMP</name>
        <dbReference type="ChEBI" id="CHEBI:57567"/>
    </ligand>
</feature>
<feature type="binding site" evidence="2">
    <location>
        <position position="263"/>
    </location>
    <ligand>
        <name>N(6)-(1,2-dicarboxyethyl)-AMP</name>
        <dbReference type="ChEBI" id="CHEBI:57567"/>
    </ligand>
</feature>
<feature type="binding site" evidence="2">
    <location>
        <begin position="268"/>
        <end position="270"/>
    </location>
    <ligand>
        <name>N(6)-(1,2-dicarboxyethyl)-AMP</name>
        <dbReference type="ChEBI" id="CHEBI:57567"/>
    </ligand>
</feature>
<feature type="binding site" evidence="2">
    <location>
        <position position="276"/>
    </location>
    <ligand>
        <name>N(6)-(1,2-dicarboxyethyl)-AMP</name>
        <dbReference type="ChEBI" id="CHEBI:57567"/>
    </ligand>
</feature>
<feature type="binding site" evidence="2">
    <location>
        <begin position="307"/>
        <end position="311"/>
    </location>
    <ligand>
        <name>N(6)-(1,2-dicarboxyethyl)-AMP</name>
        <dbReference type="ChEBI" id="CHEBI:57567"/>
    </ligand>
</feature>
<sequence length="431" mass="49603">MIERYSREEMSNIWTDQNRYEAWLEVEILACEAWSELGHIPKADVQKIRQNAKVNVERAQEIEQETRHDVVAFTRQVSETLGEERKWVHYGLTSTDVVDTALSFVIKQANDIIEKDLERFIDVLAEKAKNYKYTLMMGRTHGVHAEPTTFGVKMALWYTEMQRNLQRFKQVREEIEVGKMSGAVGTFANIPPEIESYVCKHLGIGTAPVSTQTLQRDRHAYYIATLALIATSLEKFAVEIRNLQKTETREVEEAFAKGQKGSSAMPHKRNPIGSENITGISRVIRGYITTAYENVPLWHERDISHSSAERIMLPDVTIALDYALNRFTNIVDRLTVFEDNMRNNIDKTFGLIFSQRVLLALINKGMVREEAYDKVQPKAMISWETKTPFRELIEQDESITSVLTKEELDECFDPKHHLNQVDTIFERAGLA</sequence>
<keyword id="KW-0456">Lyase</keyword>
<keyword id="KW-0658">Purine biosynthesis</keyword>
<keyword id="KW-1185">Reference proteome</keyword>
<gene>
    <name type="primary">purB</name>
    <name type="ordered locus">SAOUHSC_02126</name>
</gene>
<proteinExistence type="inferred from homology"/>
<evidence type="ECO:0000250" key="1"/>
<evidence type="ECO:0000250" key="2">
    <source>
        <dbReference type="UniProtKB" id="P0AB89"/>
    </source>
</evidence>
<evidence type="ECO:0000305" key="3"/>
<dbReference type="EC" id="4.3.2.2" evidence="2"/>
<dbReference type="EMBL" id="CP000253">
    <property type="protein sequence ID" value="ABD31175.1"/>
    <property type="molecule type" value="Genomic_DNA"/>
</dbReference>
<dbReference type="RefSeq" id="WP_000572878.1">
    <property type="nucleotide sequence ID" value="NZ_LS483365.1"/>
</dbReference>
<dbReference type="RefSeq" id="YP_500617.1">
    <property type="nucleotide sequence ID" value="NC_007795.1"/>
</dbReference>
<dbReference type="SMR" id="Q2G2S0"/>
<dbReference type="STRING" id="93061.SAOUHSC_02126"/>
<dbReference type="PaxDb" id="1280-SAXN108_2008"/>
<dbReference type="GeneID" id="3921197"/>
<dbReference type="KEGG" id="sao:SAOUHSC_02126"/>
<dbReference type="PATRIC" id="fig|93061.5.peg.1929"/>
<dbReference type="eggNOG" id="COG0015">
    <property type="taxonomic scope" value="Bacteria"/>
</dbReference>
<dbReference type="HOGENOM" id="CLU_030949_0_1_9"/>
<dbReference type="OrthoDB" id="9768878at2"/>
<dbReference type="UniPathway" id="UPA00074">
    <property type="reaction ID" value="UER00132"/>
</dbReference>
<dbReference type="UniPathway" id="UPA00075">
    <property type="reaction ID" value="UER00336"/>
</dbReference>
<dbReference type="PRO" id="PR:Q2G2S0"/>
<dbReference type="Proteomes" id="UP000008816">
    <property type="component" value="Chromosome"/>
</dbReference>
<dbReference type="GO" id="GO:0005829">
    <property type="term" value="C:cytosol"/>
    <property type="evidence" value="ECO:0000318"/>
    <property type="project" value="GO_Central"/>
</dbReference>
<dbReference type="GO" id="GO:0070626">
    <property type="term" value="F:(S)-2-(5-amino-1-(5-phospho-D-ribosyl)imidazole-4-carboxamido) succinate lyase (fumarate-forming) activity"/>
    <property type="evidence" value="ECO:0000318"/>
    <property type="project" value="GO_Central"/>
</dbReference>
<dbReference type="GO" id="GO:0004018">
    <property type="term" value="F:N6-(1,2-dicarboxyethyl)AMP AMP-lyase (fumarate-forming) activity"/>
    <property type="evidence" value="ECO:0000318"/>
    <property type="project" value="GO_Central"/>
</dbReference>
<dbReference type="GO" id="GO:0044208">
    <property type="term" value="P:'de novo' AMP biosynthetic process"/>
    <property type="evidence" value="ECO:0000318"/>
    <property type="project" value="GO_Central"/>
</dbReference>
<dbReference type="GO" id="GO:0006189">
    <property type="term" value="P:'de novo' IMP biosynthetic process"/>
    <property type="evidence" value="ECO:0007669"/>
    <property type="project" value="UniProtKB-UniPathway"/>
</dbReference>
<dbReference type="CDD" id="cd01360">
    <property type="entry name" value="Adenylsuccinate_lyase_1"/>
    <property type="match status" value="1"/>
</dbReference>
<dbReference type="FunFam" id="1.10.275.10:FF:000006">
    <property type="entry name" value="Adenylosuccinate lyase"/>
    <property type="match status" value="1"/>
</dbReference>
<dbReference type="FunFam" id="1.10.40.30:FF:000007">
    <property type="entry name" value="Adenylosuccinate lyase"/>
    <property type="match status" value="1"/>
</dbReference>
<dbReference type="FunFam" id="1.20.200.10:FF:000008">
    <property type="entry name" value="Adenylosuccinate lyase"/>
    <property type="match status" value="1"/>
</dbReference>
<dbReference type="Gene3D" id="1.10.40.30">
    <property type="entry name" value="Fumarase/aspartase (C-terminal domain)"/>
    <property type="match status" value="1"/>
</dbReference>
<dbReference type="Gene3D" id="1.20.200.10">
    <property type="entry name" value="Fumarase/aspartase (Central domain)"/>
    <property type="match status" value="1"/>
</dbReference>
<dbReference type="Gene3D" id="1.10.275.10">
    <property type="entry name" value="Fumarase/aspartase (N-terminal domain)"/>
    <property type="match status" value="1"/>
</dbReference>
<dbReference type="InterPro" id="IPR019468">
    <property type="entry name" value="AdenyloSucc_lyase_C"/>
</dbReference>
<dbReference type="InterPro" id="IPR024083">
    <property type="entry name" value="Fumarase/histidase_N"/>
</dbReference>
<dbReference type="InterPro" id="IPR020557">
    <property type="entry name" value="Fumarate_lyase_CS"/>
</dbReference>
<dbReference type="InterPro" id="IPR000362">
    <property type="entry name" value="Fumarate_lyase_fam"/>
</dbReference>
<dbReference type="InterPro" id="IPR022761">
    <property type="entry name" value="Fumarate_lyase_N"/>
</dbReference>
<dbReference type="InterPro" id="IPR008948">
    <property type="entry name" value="L-Aspartase-like"/>
</dbReference>
<dbReference type="InterPro" id="IPR004769">
    <property type="entry name" value="Pur_lyase"/>
</dbReference>
<dbReference type="NCBIfam" id="TIGR00928">
    <property type="entry name" value="purB"/>
    <property type="match status" value="1"/>
</dbReference>
<dbReference type="PANTHER" id="PTHR43172">
    <property type="entry name" value="ADENYLOSUCCINATE LYASE"/>
    <property type="match status" value="1"/>
</dbReference>
<dbReference type="PANTHER" id="PTHR43172:SF1">
    <property type="entry name" value="ADENYLOSUCCINATE LYASE"/>
    <property type="match status" value="1"/>
</dbReference>
<dbReference type="Pfam" id="PF10397">
    <property type="entry name" value="ADSL_C"/>
    <property type="match status" value="1"/>
</dbReference>
<dbReference type="Pfam" id="PF00206">
    <property type="entry name" value="Lyase_1"/>
    <property type="match status" value="1"/>
</dbReference>
<dbReference type="PRINTS" id="PR00145">
    <property type="entry name" value="ARGSUCLYASE"/>
</dbReference>
<dbReference type="PRINTS" id="PR00149">
    <property type="entry name" value="FUMRATELYASE"/>
</dbReference>
<dbReference type="SMART" id="SM00998">
    <property type="entry name" value="ADSL_C"/>
    <property type="match status" value="1"/>
</dbReference>
<dbReference type="SUPFAM" id="SSF48557">
    <property type="entry name" value="L-aspartase-like"/>
    <property type="match status" value="1"/>
</dbReference>
<dbReference type="PROSITE" id="PS00163">
    <property type="entry name" value="FUMARATE_LYASES"/>
    <property type="match status" value="1"/>
</dbReference>
<accession>Q2G2S0</accession>
<organism>
    <name type="scientific">Staphylococcus aureus (strain NCTC 8325 / PS 47)</name>
    <dbReference type="NCBI Taxonomy" id="93061"/>
    <lineage>
        <taxon>Bacteria</taxon>
        <taxon>Bacillati</taxon>
        <taxon>Bacillota</taxon>
        <taxon>Bacilli</taxon>
        <taxon>Bacillales</taxon>
        <taxon>Staphylococcaceae</taxon>
        <taxon>Staphylococcus</taxon>
    </lineage>
</organism>
<protein>
    <recommendedName>
        <fullName>Adenylosuccinate lyase</fullName>
        <shortName>ASL</shortName>
        <ecNumber evidence="2">4.3.2.2</ecNumber>
    </recommendedName>
    <alternativeName>
        <fullName>Adenylosuccinase</fullName>
        <shortName>ASase</shortName>
    </alternativeName>
</protein>